<sequence length="64" mass="6970">MAQEQTKRTGGGDEDDTPGADGAAGQERREKLAEDTDDLLDEIDDVLEENAEDFVRAYVQKGGQ</sequence>
<proteinExistence type="inferred from homology"/>
<organism>
    <name type="scientific">Rhodococcus jostii (strain RHA1)</name>
    <dbReference type="NCBI Taxonomy" id="101510"/>
    <lineage>
        <taxon>Bacteria</taxon>
        <taxon>Bacillati</taxon>
        <taxon>Actinomycetota</taxon>
        <taxon>Actinomycetes</taxon>
        <taxon>Mycobacteriales</taxon>
        <taxon>Nocardiaceae</taxon>
        <taxon>Rhodococcus</taxon>
    </lineage>
</organism>
<feature type="chain" id="PRO_0000390608" description="Prokaryotic ubiquitin-like protein Pup">
    <location>
        <begin position="1"/>
        <end position="64"/>
    </location>
</feature>
<feature type="region of interest" description="Disordered" evidence="2">
    <location>
        <begin position="1"/>
        <end position="37"/>
    </location>
</feature>
<feature type="region of interest" description="ARC ATPase binding" evidence="1">
    <location>
        <begin position="21"/>
        <end position="58"/>
    </location>
</feature>
<feature type="coiled-coil region" evidence="1">
    <location>
        <begin position="24"/>
        <end position="52"/>
    </location>
</feature>
<feature type="compositionally biased region" description="Basic and acidic residues" evidence="2">
    <location>
        <begin position="1"/>
        <end position="11"/>
    </location>
</feature>
<feature type="modified residue" description="Deamidated glutamine" evidence="1">
    <location>
        <position position="64"/>
    </location>
</feature>
<feature type="cross-link" description="Isoglutamyl lysine isopeptide (Gln-Lys) (interchain with K-? in acceptor proteins)" evidence="1">
    <location>
        <position position="64"/>
    </location>
</feature>
<gene>
    <name evidence="1" type="primary">pup</name>
    <name type="ordered locus">RHA1_ro00845</name>
</gene>
<comment type="function">
    <text evidence="1">Protein modifier that is covalently attached to lysine residues of substrate proteins, thereby targeting them for proteasomal degradation. The tagging system is termed pupylation.</text>
</comment>
<comment type="pathway">
    <text evidence="1">Protein degradation; proteasomal Pup-dependent pathway.</text>
</comment>
<comment type="subunit">
    <text evidence="1">Strongly interacts with the proteasome-associated ATPase ARC through a hydrophobic interface; the interacting region of Pup lies in its C-terminal half. There is one Pup binding site per ARC hexamer ring.</text>
</comment>
<comment type="domain">
    <text evidence="1">The N-terminal unstructured half of Pup provides a signal required to initiate unfolding and degradation by the proteasome but is not needed for pupylation, while the C-terminal helical half of Pup interacts with ARC to target proteins to the proteasome.</text>
</comment>
<comment type="PTM">
    <text evidence="1">Is modified by deamidation of its C-terminal glutamine to glutamate by the deamidase Dop, a prerequisite to the subsequent pupylation process.</text>
</comment>
<comment type="similarity">
    <text evidence="1">Belongs to the prokaryotic ubiquitin-like protein family.</text>
</comment>
<protein>
    <recommendedName>
        <fullName evidence="1">Prokaryotic ubiquitin-like protein Pup</fullName>
    </recommendedName>
    <alternativeName>
        <fullName evidence="1">Bacterial ubiquitin-like modifier</fullName>
    </alternativeName>
</protein>
<accession>Q0SIF8</accession>
<keyword id="KW-0175">Coiled coil</keyword>
<keyword id="KW-1017">Isopeptide bond</keyword>
<keyword id="KW-0833">Ubl conjugation pathway</keyword>
<reference key="1">
    <citation type="journal article" date="2006" name="Proc. Natl. Acad. Sci. U.S.A.">
        <title>The complete genome of Rhodococcus sp. RHA1 provides insights into a catabolic powerhouse.</title>
        <authorList>
            <person name="McLeod M.P."/>
            <person name="Warren R.L."/>
            <person name="Hsiao W.W.L."/>
            <person name="Araki N."/>
            <person name="Myhre M."/>
            <person name="Fernandes C."/>
            <person name="Miyazawa D."/>
            <person name="Wong W."/>
            <person name="Lillquist A.L."/>
            <person name="Wang D."/>
            <person name="Dosanjh M."/>
            <person name="Hara H."/>
            <person name="Petrescu A."/>
            <person name="Morin R.D."/>
            <person name="Yang G."/>
            <person name="Stott J.M."/>
            <person name="Schein J.E."/>
            <person name="Shin H."/>
            <person name="Smailus D."/>
            <person name="Siddiqui A.S."/>
            <person name="Marra M.A."/>
            <person name="Jones S.J.M."/>
            <person name="Holt R."/>
            <person name="Brinkman F.S.L."/>
            <person name="Miyauchi K."/>
            <person name="Fukuda M."/>
            <person name="Davies J.E."/>
            <person name="Mohn W.W."/>
            <person name="Eltis L.D."/>
        </authorList>
    </citation>
    <scope>NUCLEOTIDE SEQUENCE [LARGE SCALE GENOMIC DNA]</scope>
    <source>
        <strain>RHA1</strain>
    </source>
</reference>
<name>PUP_RHOJR</name>
<evidence type="ECO:0000255" key="1">
    <source>
        <dbReference type="HAMAP-Rule" id="MF_02106"/>
    </source>
</evidence>
<evidence type="ECO:0000256" key="2">
    <source>
        <dbReference type="SAM" id="MobiDB-lite"/>
    </source>
</evidence>
<dbReference type="EMBL" id="CP000431">
    <property type="protein sequence ID" value="ABG92678.1"/>
    <property type="molecule type" value="Genomic_DNA"/>
</dbReference>
<dbReference type="RefSeq" id="WP_007299058.1">
    <property type="nucleotide sequence ID" value="NC_008268.1"/>
</dbReference>
<dbReference type="SMR" id="Q0SIF8"/>
<dbReference type="KEGG" id="rha:RHA1_ro00845"/>
<dbReference type="eggNOG" id="ENOG50333JS">
    <property type="taxonomic scope" value="Bacteria"/>
</dbReference>
<dbReference type="HOGENOM" id="CLU_183816_1_0_11"/>
<dbReference type="UniPathway" id="UPA00997"/>
<dbReference type="Proteomes" id="UP000008710">
    <property type="component" value="Chromosome"/>
</dbReference>
<dbReference type="GO" id="GO:0070628">
    <property type="term" value="F:proteasome binding"/>
    <property type="evidence" value="ECO:0007669"/>
    <property type="project" value="UniProtKB-UniRule"/>
</dbReference>
<dbReference type="GO" id="GO:0031386">
    <property type="term" value="F:protein tag activity"/>
    <property type="evidence" value="ECO:0007669"/>
    <property type="project" value="UniProtKB-UniRule"/>
</dbReference>
<dbReference type="GO" id="GO:0019941">
    <property type="term" value="P:modification-dependent protein catabolic process"/>
    <property type="evidence" value="ECO:0007669"/>
    <property type="project" value="UniProtKB-UniRule"/>
</dbReference>
<dbReference type="GO" id="GO:0010498">
    <property type="term" value="P:proteasomal protein catabolic process"/>
    <property type="evidence" value="ECO:0007669"/>
    <property type="project" value="UniProtKB-UniRule"/>
</dbReference>
<dbReference type="GO" id="GO:0070490">
    <property type="term" value="P:protein pupylation"/>
    <property type="evidence" value="ECO:0007669"/>
    <property type="project" value="UniProtKB-UniRule"/>
</dbReference>
<dbReference type="HAMAP" id="MF_02106">
    <property type="entry name" value="Pup"/>
    <property type="match status" value="1"/>
</dbReference>
<dbReference type="InterPro" id="IPR008515">
    <property type="entry name" value="Ubiquitin-like_Pup"/>
</dbReference>
<dbReference type="NCBIfam" id="TIGR03687">
    <property type="entry name" value="pupylate_cterm"/>
    <property type="match status" value="1"/>
</dbReference>
<dbReference type="Pfam" id="PF05639">
    <property type="entry name" value="Pup"/>
    <property type="match status" value="1"/>
</dbReference>